<proteinExistence type="inferred from homology"/>
<accession>A1RR50</accession>
<organism>
    <name type="scientific">Pyrobaculum islandicum (strain DSM 4184 / JCM 9189 / GEO3)</name>
    <dbReference type="NCBI Taxonomy" id="384616"/>
    <lineage>
        <taxon>Archaea</taxon>
        <taxon>Thermoproteota</taxon>
        <taxon>Thermoprotei</taxon>
        <taxon>Thermoproteales</taxon>
        <taxon>Thermoproteaceae</taxon>
        <taxon>Pyrobaculum</taxon>
    </lineage>
</organism>
<keyword id="KW-0120">Carbon dioxide fixation</keyword>
<keyword id="KW-0456">Lyase</keyword>
<keyword id="KW-0460">Magnesium</keyword>
<protein>
    <recommendedName>
        <fullName evidence="1">Phosphoenolpyruvate carboxylase</fullName>
        <shortName evidence="1">PEPC</shortName>
        <shortName evidence="1">PEPCase</shortName>
        <ecNumber evidence="1">4.1.1.31</ecNumber>
    </recommendedName>
</protein>
<evidence type="ECO:0000255" key="1">
    <source>
        <dbReference type="HAMAP-Rule" id="MF_01904"/>
    </source>
</evidence>
<comment type="function">
    <text evidence="1">Catalyzes the irreversible beta-carboxylation of phosphoenolpyruvate (PEP) to form oxaloacetate (OAA), a four-carbon dicarboxylic acid source for the tricarboxylic acid cycle.</text>
</comment>
<comment type="catalytic activity">
    <reaction evidence="1">
        <text>oxaloacetate + phosphate = phosphoenolpyruvate + hydrogencarbonate</text>
        <dbReference type="Rhea" id="RHEA:28370"/>
        <dbReference type="ChEBI" id="CHEBI:16452"/>
        <dbReference type="ChEBI" id="CHEBI:17544"/>
        <dbReference type="ChEBI" id="CHEBI:43474"/>
        <dbReference type="ChEBI" id="CHEBI:58702"/>
        <dbReference type="EC" id="4.1.1.31"/>
    </reaction>
</comment>
<comment type="cofactor">
    <cofactor evidence="1">
        <name>Mg(2+)</name>
        <dbReference type="ChEBI" id="CHEBI:18420"/>
    </cofactor>
</comment>
<comment type="subunit">
    <text evidence="1">Homotetramer.</text>
</comment>
<comment type="similarity">
    <text evidence="1">Belongs to the PEPCase type 2 family.</text>
</comment>
<feature type="chain" id="PRO_0000309610" description="Phosphoenolpyruvate carboxylase">
    <location>
        <begin position="1"/>
        <end position="461"/>
    </location>
</feature>
<sequence length="461" mass="52098">MIPRLMCTQHPDATVKVTANEEVDEALVAYTAYGCDEVMIDYEGKTTPYSQPKDITVKAYEAGLPLGEKFFLTPRMPNPRLEEFERSMLTLEAAILANYFSVKLMGRQAIRWIVLPMVTDIETLGLVYRMLLHKTEAYIKETGVKLEPPELIPLIEDAIAQLKADELISGLLKQMAQQPQYIRLFLGKSDSAVRHGHLASALAIVATLSKMRSVEKSLGIKIYPILGMGSPPFRGGINNPSLSHLETIQYVGYYTVTVQSAVRYDTSYDEYIKVRETILNACCLPSREINLPELEEIITKASSTYKSVVVKFADRIVQMARLIPGTRDRISWTVYGRNITAEDRVVNMPRAIVYTSAWYAMGLPPTFLDAPTVVELAKSDKLDLVLKALPSLRREWEYDAQFYDPQVASRYTSEDFVKVVNEMLDYLGINLRANGTYLSLLRMNRNESNILAMGKYRKFLG</sequence>
<name>CAPPA_PYRIL</name>
<reference key="1">
    <citation type="submission" date="2006-12" db="EMBL/GenBank/DDBJ databases">
        <title>Complete sequence of Pyrobaculum islandicum DSM 4184.</title>
        <authorList>
            <person name="Copeland A."/>
            <person name="Lucas S."/>
            <person name="Lapidus A."/>
            <person name="Barry K."/>
            <person name="Detter J.C."/>
            <person name="Glavina del Rio T."/>
            <person name="Dalin E."/>
            <person name="Tice H."/>
            <person name="Pitluck S."/>
            <person name="Meincke L."/>
            <person name="Brettin T."/>
            <person name="Bruce D."/>
            <person name="Han C."/>
            <person name="Tapia R."/>
            <person name="Gilna P."/>
            <person name="Schmutz J."/>
            <person name="Larimer F."/>
            <person name="Land M."/>
            <person name="Hauser L."/>
            <person name="Kyrpides N."/>
            <person name="Mikhailova N."/>
            <person name="Cozen A.E."/>
            <person name="Fitz-Gibbon S.T."/>
            <person name="House C.H."/>
            <person name="Saltikov C."/>
            <person name="Lowe T."/>
            <person name="Richardson P."/>
        </authorList>
    </citation>
    <scope>NUCLEOTIDE SEQUENCE [LARGE SCALE GENOMIC DNA]</scope>
    <source>
        <strain>DSM 4184 / JCM 9189 / GEO3</strain>
    </source>
</reference>
<dbReference type="EC" id="4.1.1.31" evidence="1"/>
<dbReference type="EMBL" id="CP000504">
    <property type="protein sequence ID" value="ABL87432.1"/>
    <property type="molecule type" value="Genomic_DNA"/>
</dbReference>
<dbReference type="RefSeq" id="WP_011762009.1">
    <property type="nucleotide sequence ID" value="NC_008701.1"/>
</dbReference>
<dbReference type="SMR" id="A1RR50"/>
<dbReference type="STRING" id="384616.Pisl_0252"/>
<dbReference type="GeneID" id="4616997"/>
<dbReference type="KEGG" id="pis:Pisl_0252"/>
<dbReference type="eggNOG" id="arCOG04435">
    <property type="taxonomic scope" value="Archaea"/>
</dbReference>
<dbReference type="HOGENOM" id="CLU_517433_0_0_2"/>
<dbReference type="OrthoDB" id="85849at2157"/>
<dbReference type="Proteomes" id="UP000002595">
    <property type="component" value="Chromosome"/>
</dbReference>
<dbReference type="GO" id="GO:0000287">
    <property type="term" value="F:magnesium ion binding"/>
    <property type="evidence" value="ECO:0007669"/>
    <property type="project" value="UniProtKB-UniRule"/>
</dbReference>
<dbReference type="GO" id="GO:0008964">
    <property type="term" value="F:phosphoenolpyruvate carboxylase activity"/>
    <property type="evidence" value="ECO:0007669"/>
    <property type="project" value="UniProtKB-UniRule"/>
</dbReference>
<dbReference type="GO" id="GO:0015977">
    <property type="term" value="P:carbon fixation"/>
    <property type="evidence" value="ECO:0007669"/>
    <property type="project" value="UniProtKB-UniRule"/>
</dbReference>
<dbReference type="GO" id="GO:0006107">
    <property type="term" value="P:oxaloacetate metabolic process"/>
    <property type="evidence" value="ECO:0007669"/>
    <property type="project" value="UniProtKB-UniRule"/>
</dbReference>
<dbReference type="GO" id="GO:0006099">
    <property type="term" value="P:tricarboxylic acid cycle"/>
    <property type="evidence" value="ECO:0007669"/>
    <property type="project" value="InterPro"/>
</dbReference>
<dbReference type="HAMAP" id="MF_01904">
    <property type="entry name" value="PEPcase_type2"/>
    <property type="match status" value="1"/>
</dbReference>
<dbReference type="InterPro" id="IPR007566">
    <property type="entry name" value="PEP_COase_arc-type"/>
</dbReference>
<dbReference type="InterPro" id="IPR015813">
    <property type="entry name" value="Pyrv/PenolPyrv_kinase-like_dom"/>
</dbReference>
<dbReference type="NCBIfam" id="TIGR02751">
    <property type="entry name" value="PEPCase_arch"/>
    <property type="match status" value="1"/>
</dbReference>
<dbReference type="Pfam" id="PF14010">
    <property type="entry name" value="PEPcase_2"/>
    <property type="match status" value="1"/>
</dbReference>
<dbReference type="PIRSF" id="PIRSF006677">
    <property type="entry name" value="UCP006677"/>
    <property type="match status" value="1"/>
</dbReference>
<dbReference type="SUPFAM" id="SSF51621">
    <property type="entry name" value="Phosphoenolpyruvate/pyruvate domain"/>
    <property type="match status" value="1"/>
</dbReference>
<gene>
    <name evidence="1" type="primary">ppcA</name>
    <name type="ordered locus">Pisl_0252</name>
</gene>